<dbReference type="EC" id="6.2.1.1" evidence="1"/>
<dbReference type="EMBL" id="BA000030">
    <property type="protein sequence ID" value="BAC72311.1"/>
    <property type="molecule type" value="Genomic_DNA"/>
</dbReference>
<dbReference type="SMR" id="Q82EL5"/>
<dbReference type="KEGG" id="sma:SAVERM_4599"/>
<dbReference type="eggNOG" id="COG0365">
    <property type="taxonomic scope" value="Bacteria"/>
</dbReference>
<dbReference type="HOGENOM" id="CLU_000022_3_6_11"/>
<dbReference type="OrthoDB" id="9803968at2"/>
<dbReference type="Proteomes" id="UP000000428">
    <property type="component" value="Chromosome"/>
</dbReference>
<dbReference type="GO" id="GO:0005829">
    <property type="term" value="C:cytosol"/>
    <property type="evidence" value="ECO:0007669"/>
    <property type="project" value="TreeGrafter"/>
</dbReference>
<dbReference type="GO" id="GO:0003987">
    <property type="term" value="F:acetate-CoA ligase activity"/>
    <property type="evidence" value="ECO:0007669"/>
    <property type="project" value="UniProtKB-UniRule"/>
</dbReference>
<dbReference type="GO" id="GO:0016208">
    <property type="term" value="F:AMP binding"/>
    <property type="evidence" value="ECO:0007669"/>
    <property type="project" value="InterPro"/>
</dbReference>
<dbReference type="GO" id="GO:0005524">
    <property type="term" value="F:ATP binding"/>
    <property type="evidence" value="ECO:0007669"/>
    <property type="project" value="UniProtKB-KW"/>
</dbReference>
<dbReference type="GO" id="GO:0046872">
    <property type="term" value="F:metal ion binding"/>
    <property type="evidence" value="ECO:0007669"/>
    <property type="project" value="UniProtKB-KW"/>
</dbReference>
<dbReference type="GO" id="GO:0019427">
    <property type="term" value="P:acetyl-CoA biosynthetic process from acetate"/>
    <property type="evidence" value="ECO:0007669"/>
    <property type="project" value="InterPro"/>
</dbReference>
<dbReference type="CDD" id="cd05966">
    <property type="entry name" value="ACS"/>
    <property type="match status" value="1"/>
</dbReference>
<dbReference type="FunFam" id="3.40.50.12780:FF:000001">
    <property type="entry name" value="Acetyl-coenzyme A synthetase"/>
    <property type="match status" value="1"/>
</dbReference>
<dbReference type="Gene3D" id="3.30.300.30">
    <property type="match status" value="1"/>
</dbReference>
<dbReference type="Gene3D" id="3.40.50.12780">
    <property type="entry name" value="N-terminal domain of ligase-like"/>
    <property type="match status" value="1"/>
</dbReference>
<dbReference type="HAMAP" id="MF_01123">
    <property type="entry name" value="Ac_CoA_synth"/>
    <property type="match status" value="1"/>
</dbReference>
<dbReference type="InterPro" id="IPR011904">
    <property type="entry name" value="Ac_CoA_lig"/>
</dbReference>
<dbReference type="InterPro" id="IPR032387">
    <property type="entry name" value="ACAS_N"/>
</dbReference>
<dbReference type="InterPro" id="IPR025110">
    <property type="entry name" value="AMP-bd_C"/>
</dbReference>
<dbReference type="InterPro" id="IPR045851">
    <property type="entry name" value="AMP-bd_C_sf"/>
</dbReference>
<dbReference type="InterPro" id="IPR020845">
    <property type="entry name" value="AMP-binding_CS"/>
</dbReference>
<dbReference type="InterPro" id="IPR000873">
    <property type="entry name" value="AMP-dep_synth/lig_dom"/>
</dbReference>
<dbReference type="InterPro" id="IPR042099">
    <property type="entry name" value="ANL_N_sf"/>
</dbReference>
<dbReference type="NCBIfam" id="TIGR02188">
    <property type="entry name" value="Ac_CoA_lig_AcsA"/>
    <property type="match status" value="1"/>
</dbReference>
<dbReference type="NCBIfam" id="NF001208">
    <property type="entry name" value="PRK00174.1"/>
    <property type="match status" value="1"/>
</dbReference>
<dbReference type="PANTHER" id="PTHR24095">
    <property type="entry name" value="ACETYL-COENZYME A SYNTHETASE"/>
    <property type="match status" value="1"/>
</dbReference>
<dbReference type="PANTHER" id="PTHR24095:SF14">
    <property type="entry name" value="ACETYL-COENZYME A SYNTHETASE 1"/>
    <property type="match status" value="1"/>
</dbReference>
<dbReference type="Pfam" id="PF16177">
    <property type="entry name" value="ACAS_N"/>
    <property type="match status" value="1"/>
</dbReference>
<dbReference type="Pfam" id="PF00501">
    <property type="entry name" value="AMP-binding"/>
    <property type="match status" value="1"/>
</dbReference>
<dbReference type="Pfam" id="PF13193">
    <property type="entry name" value="AMP-binding_C"/>
    <property type="match status" value="1"/>
</dbReference>
<dbReference type="SUPFAM" id="SSF56801">
    <property type="entry name" value="Acetyl-CoA synthetase-like"/>
    <property type="match status" value="1"/>
</dbReference>
<dbReference type="PROSITE" id="PS00455">
    <property type="entry name" value="AMP_BINDING"/>
    <property type="match status" value="1"/>
</dbReference>
<evidence type="ECO:0000255" key="1">
    <source>
        <dbReference type="HAMAP-Rule" id="MF_01123"/>
    </source>
</evidence>
<gene>
    <name evidence="1" type="primary">acsA</name>
    <name type="ordered locus">SAV_4599</name>
</gene>
<protein>
    <recommendedName>
        <fullName evidence="1">Acetyl-coenzyme A synthetase</fullName>
        <shortName evidence="1">AcCoA synthetase</shortName>
        <shortName evidence="1">Acs</shortName>
        <ecNumber evidence="1">6.2.1.1</ecNumber>
    </recommendedName>
    <alternativeName>
        <fullName evidence="1">Acetate--CoA ligase</fullName>
    </alternativeName>
    <alternativeName>
        <fullName evidence="1">Acyl-activating enzyme</fullName>
    </alternativeName>
</protein>
<organism>
    <name type="scientific">Streptomyces avermitilis (strain ATCC 31267 / DSM 46492 / JCM 5070 / NBRC 14893 / NCIMB 12804 / NRRL 8165 / MA-4680)</name>
    <dbReference type="NCBI Taxonomy" id="227882"/>
    <lineage>
        <taxon>Bacteria</taxon>
        <taxon>Bacillati</taxon>
        <taxon>Actinomycetota</taxon>
        <taxon>Actinomycetes</taxon>
        <taxon>Kitasatosporales</taxon>
        <taxon>Streptomycetaceae</taxon>
        <taxon>Streptomyces</taxon>
    </lineage>
</organism>
<proteinExistence type="inferred from homology"/>
<accession>Q82EL5</accession>
<name>ACSA_STRAW</name>
<reference key="1">
    <citation type="journal article" date="2001" name="Proc. Natl. Acad. Sci. U.S.A.">
        <title>Genome sequence of an industrial microorganism Streptomyces avermitilis: deducing the ability of producing secondary metabolites.</title>
        <authorList>
            <person name="Omura S."/>
            <person name="Ikeda H."/>
            <person name="Ishikawa J."/>
            <person name="Hanamoto A."/>
            <person name="Takahashi C."/>
            <person name="Shinose M."/>
            <person name="Takahashi Y."/>
            <person name="Horikawa H."/>
            <person name="Nakazawa H."/>
            <person name="Osonoe T."/>
            <person name="Kikuchi H."/>
            <person name="Shiba T."/>
            <person name="Sakaki Y."/>
            <person name="Hattori M."/>
        </authorList>
    </citation>
    <scope>NUCLEOTIDE SEQUENCE [LARGE SCALE GENOMIC DNA]</scope>
    <source>
        <strain>ATCC 31267 / DSM 46492 / JCM 5070 / NBRC 14893 / NCIMB 12804 / NRRL 8165 / MA-4680</strain>
    </source>
</reference>
<reference key="2">
    <citation type="journal article" date="2003" name="Nat. Biotechnol.">
        <title>Complete genome sequence and comparative analysis of the industrial microorganism Streptomyces avermitilis.</title>
        <authorList>
            <person name="Ikeda H."/>
            <person name="Ishikawa J."/>
            <person name="Hanamoto A."/>
            <person name="Shinose M."/>
            <person name="Kikuchi H."/>
            <person name="Shiba T."/>
            <person name="Sakaki Y."/>
            <person name="Hattori M."/>
            <person name="Omura S."/>
        </authorList>
    </citation>
    <scope>NUCLEOTIDE SEQUENCE [LARGE SCALE GENOMIC DNA]</scope>
    <source>
        <strain>ATCC 31267 / DSM 46492 / JCM 5070 / NBRC 14893 / NCIMB 12804 / NRRL 8165 / MA-4680</strain>
    </source>
</reference>
<keyword id="KW-0007">Acetylation</keyword>
<keyword id="KW-0067">ATP-binding</keyword>
<keyword id="KW-0436">Ligase</keyword>
<keyword id="KW-0460">Magnesium</keyword>
<keyword id="KW-0479">Metal-binding</keyword>
<keyword id="KW-0547">Nucleotide-binding</keyword>
<keyword id="KW-1185">Reference proteome</keyword>
<sequence length="652" mass="71091">MSNESLANLLKEERRFAPPADLAANANVTAEAYEQAKADRLGFWAEQARRLTWATEPTETLDWSNPPFAKWFKDGKLNVAYNCVDRHVEAGHGDRVAIHFEGEPGDSRAITYAELKDEVSKAANALTELGVQKGDRVAVYLPMIPEAVVAMLACARIGAAHSVVFGGFSADAIAARIKDADAKLVITADGGYRRGKPSALKPAVDDAVSRGDGVEKVLVVRRTGQEVAWTEGRDVWWHEITAKQSAEHTPEAFDAEHPLFILYTSGTTGKPKGILHTSGGYLTQTSYTHHAVFDLKPETDVYWCTADIGWVTGHSYITYGPLSNGATQVMYEGTPDTPHQGRFWEIVQKYGVTILYTAPTAIRTFMKWGDDIPAKFDLSSLRVLGSVGEPINPEAWIWYRKHIGGDRTPIVDTWWQTETGAMMISPLPGVTETKPGSAQRPLPGISATVVDDEAREVPNGGGGYLVLTEPWPSMLRTIWGDDQRFLDTYWSRFEGKYFAGDGAKKDEDGDIWLLGRVDDVMLVSGHNISTTEVESALVSHPSVAEAAVVGAADETTGQAIVAFVILRGTANAEDDNLVADLRNHVGTTLGPIAKPKRILPVAELPKTRSGKIMRRLLRDVAENRALGDVTTLTDSSVMDLIQSKLPAAPSED</sequence>
<feature type="chain" id="PRO_0000208388" description="Acetyl-coenzyme A synthetase">
    <location>
        <begin position="1"/>
        <end position="652"/>
    </location>
</feature>
<feature type="binding site" evidence="1">
    <location>
        <begin position="193"/>
        <end position="196"/>
    </location>
    <ligand>
        <name>CoA</name>
        <dbReference type="ChEBI" id="CHEBI:57287"/>
    </ligand>
</feature>
<feature type="binding site" evidence="1">
    <location>
        <position position="312"/>
    </location>
    <ligand>
        <name>CoA</name>
        <dbReference type="ChEBI" id="CHEBI:57287"/>
    </ligand>
</feature>
<feature type="binding site" evidence="1">
    <location>
        <begin position="388"/>
        <end position="390"/>
    </location>
    <ligand>
        <name>ATP</name>
        <dbReference type="ChEBI" id="CHEBI:30616"/>
    </ligand>
</feature>
<feature type="binding site" evidence="1">
    <location>
        <begin position="412"/>
        <end position="417"/>
    </location>
    <ligand>
        <name>ATP</name>
        <dbReference type="ChEBI" id="CHEBI:30616"/>
    </ligand>
</feature>
<feature type="binding site" evidence="1">
    <location>
        <position position="501"/>
    </location>
    <ligand>
        <name>ATP</name>
        <dbReference type="ChEBI" id="CHEBI:30616"/>
    </ligand>
</feature>
<feature type="binding site" evidence="1">
    <location>
        <position position="516"/>
    </location>
    <ligand>
        <name>ATP</name>
        <dbReference type="ChEBI" id="CHEBI:30616"/>
    </ligand>
</feature>
<feature type="binding site" evidence="1">
    <location>
        <position position="524"/>
    </location>
    <ligand>
        <name>CoA</name>
        <dbReference type="ChEBI" id="CHEBI:57287"/>
    </ligand>
</feature>
<feature type="binding site" evidence="1">
    <location>
        <position position="538"/>
    </location>
    <ligand>
        <name>Mg(2+)</name>
        <dbReference type="ChEBI" id="CHEBI:18420"/>
    </ligand>
</feature>
<feature type="binding site" evidence="1">
    <location>
        <position position="540"/>
    </location>
    <ligand>
        <name>Mg(2+)</name>
        <dbReference type="ChEBI" id="CHEBI:18420"/>
    </ligand>
</feature>
<feature type="binding site" evidence="1">
    <location>
        <position position="543"/>
    </location>
    <ligand>
        <name>Mg(2+)</name>
        <dbReference type="ChEBI" id="CHEBI:18420"/>
    </ligand>
</feature>
<feature type="modified residue" description="N6-acetyllysine" evidence="1">
    <location>
        <position position="611"/>
    </location>
</feature>
<comment type="function">
    <text evidence="1">Catalyzes the conversion of acetate into acetyl-CoA (AcCoA), an essential intermediate at the junction of anabolic and catabolic pathways. AcsA undergoes a two-step reaction. In the first half reaction, AcsA combines acetate with ATP to form acetyl-adenylate (AcAMP) intermediate. In the second half reaction, it can then transfer the acetyl group from AcAMP to the sulfhydryl group of CoA, forming the product AcCoA.</text>
</comment>
<comment type="catalytic activity">
    <reaction evidence="1">
        <text>acetate + ATP + CoA = acetyl-CoA + AMP + diphosphate</text>
        <dbReference type="Rhea" id="RHEA:23176"/>
        <dbReference type="ChEBI" id="CHEBI:30089"/>
        <dbReference type="ChEBI" id="CHEBI:30616"/>
        <dbReference type="ChEBI" id="CHEBI:33019"/>
        <dbReference type="ChEBI" id="CHEBI:57287"/>
        <dbReference type="ChEBI" id="CHEBI:57288"/>
        <dbReference type="ChEBI" id="CHEBI:456215"/>
        <dbReference type="EC" id="6.2.1.1"/>
    </reaction>
</comment>
<comment type="cofactor">
    <cofactor evidence="1">
        <name>Mg(2+)</name>
        <dbReference type="ChEBI" id="CHEBI:18420"/>
    </cofactor>
</comment>
<comment type="PTM">
    <text evidence="1">Acetylated. Deacetylation by the SIR2-homolog deacetylase activates the enzyme.</text>
</comment>
<comment type="similarity">
    <text evidence="1">Belongs to the ATP-dependent AMP-binding enzyme family.</text>
</comment>